<comment type="function">
    <text evidence="1">ATP-dependent specificity component of the Clp protease. It directs the protease to specific substrates. Can perform chaperone functions in the absence of ClpP.</text>
</comment>
<comment type="subunit">
    <text evidence="1">Component of the ClpX-ClpP complex. Forms a hexameric ring that, in the presence of ATP, binds to fourteen ClpP subunits assembled into a disk-like structure with a central cavity, resembling the structure of eukaryotic proteasomes.</text>
</comment>
<comment type="similarity">
    <text evidence="1">Belongs to the ClpX chaperone family.</text>
</comment>
<dbReference type="EMBL" id="CP000930">
    <property type="protein sequence ID" value="ABZ83086.1"/>
    <property type="molecule type" value="Genomic_DNA"/>
</dbReference>
<dbReference type="RefSeq" id="WP_012281468.1">
    <property type="nucleotide sequence ID" value="NC_010337.2"/>
</dbReference>
<dbReference type="SMR" id="B0TFI7"/>
<dbReference type="STRING" id="498761.HM1_0472"/>
<dbReference type="KEGG" id="hmo:HM1_0472"/>
<dbReference type="eggNOG" id="COG1219">
    <property type="taxonomic scope" value="Bacteria"/>
</dbReference>
<dbReference type="HOGENOM" id="CLU_014218_8_2_9"/>
<dbReference type="OrthoDB" id="9804062at2"/>
<dbReference type="Proteomes" id="UP000008550">
    <property type="component" value="Chromosome"/>
</dbReference>
<dbReference type="GO" id="GO:0009376">
    <property type="term" value="C:HslUV protease complex"/>
    <property type="evidence" value="ECO:0007669"/>
    <property type="project" value="TreeGrafter"/>
</dbReference>
<dbReference type="GO" id="GO:0005524">
    <property type="term" value="F:ATP binding"/>
    <property type="evidence" value="ECO:0007669"/>
    <property type="project" value="UniProtKB-UniRule"/>
</dbReference>
<dbReference type="GO" id="GO:0016887">
    <property type="term" value="F:ATP hydrolysis activity"/>
    <property type="evidence" value="ECO:0007669"/>
    <property type="project" value="InterPro"/>
</dbReference>
<dbReference type="GO" id="GO:0140662">
    <property type="term" value="F:ATP-dependent protein folding chaperone"/>
    <property type="evidence" value="ECO:0007669"/>
    <property type="project" value="InterPro"/>
</dbReference>
<dbReference type="GO" id="GO:0046983">
    <property type="term" value="F:protein dimerization activity"/>
    <property type="evidence" value="ECO:0007669"/>
    <property type="project" value="InterPro"/>
</dbReference>
<dbReference type="GO" id="GO:0051082">
    <property type="term" value="F:unfolded protein binding"/>
    <property type="evidence" value="ECO:0007669"/>
    <property type="project" value="UniProtKB-UniRule"/>
</dbReference>
<dbReference type="GO" id="GO:0008270">
    <property type="term" value="F:zinc ion binding"/>
    <property type="evidence" value="ECO:0007669"/>
    <property type="project" value="InterPro"/>
</dbReference>
<dbReference type="GO" id="GO:0051301">
    <property type="term" value="P:cell division"/>
    <property type="evidence" value="ECO:0007669"/>
    <property type="project" value="TreeGrafter"/>
</dbReference>
<dbReference type="GO" id="GO:0051603">
    <property type="term" value="P:proteolysis involved in protein catabolic process"/>
    <property type="evidence" value="ECO:0007669"/>
    <property type="project" value="TreeGrafter"/>
</dbReference>
<dbReference type="CDD" id="cd19497">
    <property type="entry name" value="RecA-like_ClpX"/>
    <property type="match status" value="1"/>
</dbReference>
<dbReference type="FunFam" id="1.10.8.60:FF:000002">
    <property type="entry name" value="ATP-dependent Clp protease ATP-binding subunit ClpX"/>
    <property type="match status" value="1"/>
</dbReference>
<dbReference type="FunFam" id="3.40.50.300:FF:000005">
    <property type="entry name" value="ATP-dependent Clp protease ATP-binding subunit ClpX"/>
    <property type="match status" value="1"/>
</dbReference>
<dbReference type="Gene3D" id="1.10.8.60">
    <property type="match status" value="1"/>
</dbReference>
<dbReference type="Gene3D" id="6.20.220.10">
    <property type="entry name" value="ClpX chaperone, C4-type zinc finger domain"/>
    <property type="match status" value="1"/>
</dbReference>
<dbReference type="Gene3D" id="3.40.50.300">
    <property type="entry name" value="P-loop containing nucleotide triphosphate hydrolases"/>
    <property type="match status" value="1"/>
</dbReference>
<dbReference type="HAMAP" id="MF_00175">
    <property type="entry name" value="ClpX"/>
    <property type="match status" value="1"/>
</dbReference>
<dbReference type="InterPro" id="IPR003593">
    <property type="entry name" value="AAA+_ATPase"/>
</dbReference>
<dbReference type="InterPro" id="IPR050052">
    <property type="entry name" value="ATP-dep_Clp_protease_ClpX"/>
</dbReference>
<dbReference type="InterPro" id="IPR003959">
    <property type="entry name" value="ATPase_AAA_core"/>
</dbReference>
<dbReference type="InterPro" id="IPR019489">
    <property type="entry name" value="Clp_ATPase_C"/>
</dbReference>
<dbReference type="InterPro" id="IPR004487">
    <property type="entry name" value="Clp_protease_ATP-bd_su_ClpX"/>
</dbReference>
<dbReference type="InterPro" id="IPR046425">
    <property type="entry name" value="ClpX_bact"/>
</dbReference>
<dbReference type="InterPro" id="IPR027417">
    <property type="entry name" value="P-loop_NTPase"/>
</dbReference>
<dbReference type="InterPro" id="IPR010603">
    <property type="entry name" value="Znf_CppX_C4"/>
</dbReference>
<dbReference type="InterPro" id="IPR038366">
    <property type="entry name" value="Znf_CppX_C4_sf"/>
</dbReference>
<dbReference type="NCBIfam" id="TIGR00382">
    <property type="entry name" value="clpX"/>
    <property type="match status" value="1"/>
</dbReference>
<dbReference type="NCBIfam" id="NF003745">
    <property type="entry name" value="PRK05342.1"/>
    <property type="match status" value="1"/>
</dbReference>
<dbReference type="PANTHER" id="PTHR48102:SF7">
    <property type="entry name" value="ATP-DEPENDENT CLP PROTEASE ATP-BINDING SUBUNIT CLPX-LIKE, MITOCHONDRIAL"/>
    <property type="match status" value="1"/>
</dbReference>
<dbReference type="PANTHER" id="PTHR48102">
    <property type="entry name" value="ATP-DEPENDENT CLP PROTEASE ATP-BINDING SUBUNIT CLPX-LIKE, MITOCHONDRIAL-RELATED"/>
    <property type="match status" value="1"/>
</dbReference>
<dbReference type="Pfam" id="PF07724">
    <property type="entry name" value="AAA_2"/>
    <property type="match status" value="1"/>
</dbReference>
<dbReference type="Pfam" id="PF10431">
    <property type="entry name" value="ClpB_D2-small"/>
    <property type="match status" value="1"/>
</dbReference>
<dbReference type="Pfam" id="PF06689">
    <property type="entry name" value="zf-C4_ClpX"/>
    <property type="match status" value="1"/>
</dbReference>
<dbReference type="SMART" id="SM00382">
    <property type="entry name" value="AAA"/>
    <property type="match status" value="1"/>
</dbReference>
<dbReference type="SMART" id="SM01086">
    <property type="entry name" value="ClpB_D2-small"/>
    <property type="match status" value="1"/>
</dbReference>
<dbReference type="SMART" id="SM00994">
    <property type="entry name" value="zf-C4_ClpX"/>
    <property type="match status" value="1"/>
</dbReference>
<dbReference type="SUPFAM" id="SSF57716">
    <property type="entry name" value="Glucocorticoid receptor-like (DNA-binding domain)"/>
    <property type="match status" value="1"/>
</dbReference>
<dbReference type="SUPFAM" id="SSF52540">
    <property type="entry name" value="P-loop containing nucleoside triphosphate hydrolases"/>
    <property type="match status" value="1"/>
</dbReference>
<dbReference type="PROSITE" id="PS51902">
    <property type="entry name" value="CLPX_ZB"/>
    <property type="match status" value="1"/>
</dbReference>
<keyword id="KW-0067">ATP-binding</keyword>
<keyword id="KW-0143">Chaperone</keyword>
<keyword id="KW-0479">Metal-binding</keyword>
<keyword id="KW-0547">Nucleotide-binding</keyword>
<keyword id="KW-1185">Reference proteome</keyword>
<keyword id="KW-0862">Zinc</keyword>
<reference key="1">
    <citation type="journal article" date="2008" name="J. Bacteriol.">
        <title>The genome of Heliobacterium modesticaldum, a phototrophic representative of the Firmicutes containing the simplest photosynthetic apparatus.</title>
        <authorList>
            <person name="Sattley W.M."/>
            <person name="Madigan M.T."/>
            <person name="Swingley W.D."/>
            <person name="Cheung P.C."/>
            <person name="Clocksin K.M."/>
            <person name="Conrad A.L."/>
            <person name="Dejesa L.C."/>
            <person name="Honchak B.M."/>
            <person name="Jung D.O."/>
            <person name="Karbach L.E."/>
            <person name="Kurdoglu A."/>
            <person name="Lahiri S."/>
            <person name="Mastrian S.D."/>
            <person name="Page L.E."/>
            <person name="Taylor H.L."/>
            <person name="Wang Z.T."/>
            <person name="Raymond J."/>
            <person name="Chen M."/>
            <person name="Blankenship R.E."/>
            <person name="Touchman J.W."/>
        </authorList>
    </citation>
    <scope>NUCLEOTIDE SEQUENCE [LARGE SCALE GENOMIC DNA]</scope>
    <source>
        <strain>ATCC 51547 / Ice1</strain>
    </source>
</reference>
<accession>B0TFI7</accession>
<evidence type="ECO:0000255" key="1">
    <source>
        <dbReference type="HAMAP-Rule" id="MF_00175"/>
    </source>
</evidence>
<evidence type="ECO:0000255" key="2">
    <source>
        <dbReference type="PROSITE-ProRule" id="PRU01250"/>
    </source>
</evidence>
<feature type="chain" id="PRO_1000097958" description="ATP-dependent Clp protease ATP-binding subunit ClpX">
    <location>
        <begin position="1"/>
        <end position="420"/>
    </location>
</feature>
<feature type="domain" description="ClpX-type ZB" evidence="2">
    <location>
        <begin position="2"/>
        <end position="55"/>
    </location>
</feature>
<feature type="binding site" evidence="2">
    <location>
        <position position="14"/>
    </location>
    <ligand>
        <name>Zn(2+)</name>
        <dbReference type="ChEBI" id="CHEBI:29105"/>
    </ligand>
</feature>
<feature type="binding site" evidence="2">
    <location>
        <position position="17"/>
    </location>
    <ligand>
        <name>Zn(2+)</name>
        <dbReference type="ChEBI" id="CHEBI:29105"/>
    </ligand>
</feature>
<feature type="binding site" evidence="2">
    <location>
        <position position="36"/>
    </location>
    <ligand>
        <name>Zn(2+)</name>
        <dbReference type="ChEBI" id="CHEBI:29105"/>
    </ligand>
</feature>
<feature type="binding site" evidence="2">
    <location>
        <position position="39"/>
    </location>
    <ligand>
        <name>Zn(2+)</name>
        <dbReference type="ChEBI" id="CHEBI:29105"/>
    </ligand>
</feature>
<feature type="binding site" evidence="1">
    <location>
        <begin position="118"/>
        <end position="125"/>
    </location>
    <ligand>
        <name>ATP</name>
        <dbReference type="ChEBI" id="CHEBI:30616"/>
    </ligand>
</feature>
<sequence>MYKGFGDDKSQLKCSFCGKLQDQVKKLVAGPGVYICDECIELCNEIIEEELQDENTFDLGDVPKPKEIREILDQYVIGQEQAKKALSVAVYNHYKRINLGSKIDDIELQKSNIIMLGPTGSGKTLLAQTLARILNVPFAIADATSLTEAGYVGEDVENILLKLIQAADYDVEKAEKGIVYIDEIDKIARKSENPSITRDVSGEGVQQALLKILEGTVASVPPQGGRKHPHQEFIQLDTTNILFICGGAFDGIEKLIMNRIGKKTMGFNADIKGKQEKKIGETLREILPVDLLKFGLIPEFVGRLPVIVTLDALDEDALVRILTEPKNALVKQYQKFFELDQVQLEFTDDALRAIAQEAIKRNTGARGLRAILEEVMLDVMYDIPSRNDVTKCAVTKEVILKQKEPVLVTSDRKKKKEESA</sequence>
<proteinExistence type="inferred from homology"/>
<name>CLPX_HELMI</name>
<gene>
    <name evidence="1" type="primary">clpX</name>
    <name type="ordered locus">Helmi_02980</name>
    <name type="ORF">HM1_0472</name>
</gene>
<organism>
    <name type="scientific">Heliobacterium modesticaldum (strain ATCC 51547 / Ice1)</name>
    <dbReference type="NCBI Taxonomy" id="498761"/>
    <lineage>
        <taxon>Bacteria</taxon>
        <taxon>Bacillati</taxon>
        <taxon>Bacillota</taxon>
        <taxon>Clostridia</taxon>
        <taxon>Eubacteriales</taxon>
        <taxon>Heliobacteriaceae</taxon>
        <taxon>Heliomicrobium</taxon>
    </lineage>
</organism>
<protein>
    <recommendedName>
        <fullName evidence="1">ATP-dependent Clp protease ATP-binding subunit ClpX</fullName>
    </recommendedName>
</protein>